<comment type="function">
    <text evidence="1 3">Part of the small subunit (SSU) processome, first precursor of the small eukaryotic ribosomal subunit. During the assembly of the SSU processome in the nucleolus, many ribosome biogenesis factors, an RNA chaperone and ribosomal proteins associate with the nascent pre-rRNA and work in concert to generate RNA folding, modifications, rearrangements and cleavage as well as targeted degradation of pre-ribosomal RNA by the RNA exosome (By similarity). Subunit of the 40S ribosomal complex (By similarity).</text>
</comment>
<comment type="subunit">
    <text evidence="1 3">Part of the small subunit (SSU) processome, composed of more than 70 proteins and the RNA chaperone small nucleolar RNA (snoRNA) U3 (By similarity). Subunit of the 40S ribosomal complex (By similarity).</text>
</comment>
<comment type="subcellular location">
    <subcellularLocation>
        <location evidence="1">Nucleus</location>
        <location evidence="1">Nucleolus</location>
    </subcellularLocation>
</comment>
<comment type="similarity">
    <text evidence="4">Belongs to the eukaryotic ribosomal protein eS12 family.</text>
</comment>
<name>RS12_PIG</name>
<reference key="1">
    <citation type="journal article" date="1995" name="Gene">
        <title>Sequence of the porcine full-length cDNA encoding ribosomal protein rpS12.</title>
        <authorList>
            <person name="Zach O.R.F."/>
            <person name="Bauer H.C."/>
            <person name="Richter K."/>
            <person name="Webersinke G."/>
            <person name="Bauer H."/>
        </authorList>
    </citation>
    <scope>NUCLEOTIDE SEQUENCE [MRNA]</scope>
    <source>
        <tissue>Brain</tissue>
    </source>
</reference>
<keyword id="KW-0002">3D-structure</keyword>
<keyword id="KW-0007">Acetylation</keyword>
<keyword id="KW-0539">Nucleus</keyword>
<keyword id="KW-1185">Reference proteome</keyword>
<keyword id="KW-0687">Ribonucleoprotein</keyword>
<keyword id="KW-0689">Ribosomal protein</keyword>
<evidence type="ECO:0000250" key="1">
    <source>
        <dbReference type="UniProtKB" id="P25398"/>
    </source>
</evidence>
<evidence type="ECO:0000250" key="2">
    <source>
        <dbReference type="UniProtKB" id="P63323"/>
    </source>
</evidence>
<evidence type="ECO:0000250" key="3">
    <source>
        <dbReference type="UniProtKB" id="P80455"/>
    </source>
</evidence>
<evidence type="ECO:0000305" key="4"/>
<feature type="initiator methionine" description="Removed" evidence="1">
    <location>
        <position position="1"/>
    </location>
</feature>
<feature type="chain" id="PRO_0000122325" description="Small ribosomal subunit protein eS12">
    <location>
        <begin position="2"/>
        <end position="132"/>
    </location>
</feature>
<feature type="modified residue" description="N-acetylalanine" evidence="1">
    <location>
        <position position="2"/>
    </location>
</feature>
<feature type="modified residue" description="N6-succinyllysine" evidence="2">
    <location>
        <position position="129"/>
    </location>
</feature>
<accession>P46405</accession>
<gene>
    <name type="primary">RPS12</name>
</gene>
<proteinExistence type="evidence at protein level"/>
<sequence length="132" mass="14515">MAEEGIAAGGVMDVNTALQEVLKTALIHDGLARGIREAAKALDKRQAHLCVLASNCDEPMYVKLVEALCAEHQINLIKVDDNKKLGEWVGLCKIDREGKPRKVVGCSCVVVKDYGKESQAKDVIEEYFKCKK</sequence>
<dbReference type="EMBL" id="X79417">
    <property type="protein sequence ID" value="CAA55946.1"/>
    <property type="molecule type" value="mRNA"/>
</dbReference>
<dbReference type="PIR" id="JC4159">
    <property type="entry name" value="JC4159"/>
</dbReference>
<dbReference type="RefSeq" id="NP_999528.1">
    <property type="nucleotide sequence ID" value="NM_214363.1"/>
</dbReference>
<dbReference type="PDB" id="3J7R">
    <property type="method" value="EM"/>
    <property type="resolution" value="3.90 A"/>
    <property type="chains" value="SM=9-132"/>
</dbReference>
<dbReference type="PDBsum" id="3J7R"/>
<dbReference type="SMR" id="P46405"/>
<dbReference type="FunCoup" id="P46405">
    <property type="interactions" value="2136"/>
</dbReference>
<dbReference type="STRING" id="9823.ENSSSCP00000004510"/>
<dbReference type="PaxDb" id="9823-ENSSSCP00000004510"/>
<dbReference type="PeptideAtlas" id="P46405"/>
<dbReference type="Ensembl" id="ENSSSCT00000004616.4">
    <property type="protein sequence ID" value="ENSSSCP00000004510.2"/>
    <property type="gene ID" value="ENSSSCG00000004177.4"/>
</dbReference>
<dbReference type="Ensembl" id="ENSSSCT00015100251.1">
    <property type="protein sequence ID" value="ENSSSCP00015041457.1"/>
    <property type="gene ID" value="ENSSSCG00015074513.1"/>
</dbReference>
<dbReference type="Ensembl" id="ENSSSCT00025003879.1">
    <property type="protein sequence ID" value="ENSSSCP00025001497.1"/>
    <property type="gene ID" value="ENSSSCG00025002953.1"/>
</dbReference>
<dbReference type="Ensembl" id="ENSSSCT00030050781.1">
    <property type="protein sequence ID" value="ENSSSCP00030023085.1"/>
    <property type="gene ID" value="ENSSSCG00030036524.1"/>
</dbReference>
<dbReference type="Ensembl" id="ENSSSCT00035047803.1">
    <property type="protein sequence ID" value="ENSSSCP00035019127.1"/>
    <property type="gene ID" value="ENSSSCG00035036063.1"/>
</dbReference>
<dbReference type="Ensembl" id="ENSSSCT00040088968.1">
    <property type="protein sequence ID" value="ENSSSCP00040039106.1"/>
    <property type="gene ID" value="ENSSSCG00040065172.1"/>
</dbReference>
<dbReference type="Ensembl" id="ENSSSCT00045044973.1">
    <property type="protein sequence ID" value="ENSSSCP00045031201.1"/>
    <property type="gene ID" value="ENSSSCG00045026421.1"/>
</dbReference>
<dbReference type="Ensembl" id="ENSSSCT00050024929.1">
    <property type="protein sequence ID" value="ENSSSCP00050010408.1"/>
    <property type="gene ID" value="ENSSSCG00050018386.1"/>
</dbReference>
<dbReference type="Ensembl" id="ENSSSCT00055034686.1">
    <property type="protein sequence ID" value="ENSSSCP00055027544.1"/>
    <property type="gene ID" value="ENSSSCG00055017713.1"/>
</dbReference>
<dbReference type="Ensembl" id="ENSSSCT00055034802.1">
    <property type="protein sequence ID" value="ENSSSCP00055027641.1"/>
    <property type="gene ID" value="ENSSSCG00055017713.1"/>
</dbReference>
<dbReference type="Ensembl" id="ENSSSCT00060098537.1">
    <property type="protein sequence ID" value="ENSSSCP00060042736.1"/>
    <property type="gene ID" value="ENSSSCG00060072109.1"/>
</dbReference>
<dbReference type="Ensembl" id="ENSSSCT00065046991.1">
    <property type="protein sequence ID" value="ENSSSCP00065020214.1"/>
    <property type="gene ID" value="ENSSSCG00065034515.1"/>
</dbReference>
<dbReference type="Ensembl" id="ENSSSCT00065047000.1">
    <property type="protein sequence ID" value="ENSSSCP00065020218.1"/>
    <property type="gene ID" value="ENSSSCG00065034515.1"/>
</dbReference>
<dbReference type="Ensembl" id="ENSSSCT00070044762.1">
    <property type="protein sequence ID" value="ENSSSCP00070037723.1"/>
    <property type="gene ID" value="ENSSSCG00070022487.1"/>
</dbReference>
<dbReference type="Ensembl" id="ENSSSCT00070044769.1">
    <property type="protein sequence ID" value="ENSSSCP00070037728.1"/>
    <property type="gene ID" value="ENSSSCG00070022487.1"/>
</dbReference>
<dbReference type="Ensembl" id="ENSSSCT00085051631">
    <property type="protein sequence ID" value="ENSSSCP00085036149"/>
    <property type="gene ID" value="ENSSSCG00085026937"/>
</dbReference>
<dbReference type="Ensembl" id="ENSSSCT00090056954">
    <property type="protein sequence ID" value="ENSSSCP00090035551"/>
    <property type="gene ID" value="ENSSSCG00090032183"/>
</dbReference>
<dbReference type="Ensembl" id="ENSSSCT00105048892">
    <property type="protein sequence ID" value="ENSSSCP00105034372"/>
    <property type="gene ID" value="ENSSSCG00105025747"/>
</dbReference>
<dbReference type="Ensembl" id="ENSSSCT00110006304">
    <property type="protein sequence ID" value="ENSSSCP00110004627"/>
    <property type="gene ID" value="ENSSSCG00110003178"/>
</dbReference>
<dbReference type="Ensembl" id="ENSSSCT00115003181">
    <property type="protein sequence ID" value="ENSSSCP00115002941"/>
    <property type="gene ID" value="ENSSSCG00115001879"/>
</dbReference>
<dbReference type="Ensembl" id="ENSSSCT00130060624">
    <property type="protein sequence ID" value="ENSSSCP00130043514"/>
    <property type="gene ID" value="ENSSSCG00130031014"/>
</dbReference>
<dbReference type="GeneID" id="397650"/>
<dbReference type="KEGG" id="ssc:397650"/>
<dbReference type="CTD" id="6206"/>
<dbReference type="VGNC" id="VGNC:103165">
    <property type="gene designation" value="RPS12"/>
</dbReference>
<dbReference type="eggNOG" id="KOG3406">
    <property type="taxonomic scope" value="Eukaryota"/>
</dbReference>
<dbReference type="GeneTree" id="ENSGT00390000018318"/>
<dbReference type="HOGENOM" id="CLU_110343_1_1_1"/>
<dbReference type="InParanoid" id="P46405"/>
<dbReference type="OMA" id="CAEHQIP"/>
<dbReference type="OrthoDB" id="10249311at2759"/>
<dbReference type="TreeFam" id="TF300196"/>
<dbReference type="Reactome" id="R-SSC-156827">
    <property type="pathway name" value="L13a-mediated translational silencing of Ceruloplasmin expression"/>
</dbReference>
<dbReference type="Reactome" id="R-SSC-1799339">
    <property type="pathway name" value="SRP-dependent cotranslational protein targeting to membrane"/>
</dbReference>
<dbReference type="Reactome" id="R-SSC-72649">
    <property type="pathway name" value="Translation initiation complex formation"/>
</dbReference>
<dbReference type="Reactome" id="R-SSC-72689">
    <property type="pathway name" value="Formation of a pool of free 40S subunits"/>
</dbReference>
<dbReference type="Reactome" id="R-SSC-72695">
    <property type="pathway name" value="Formation of the ternary complex, and subsequently, the 43S complex"/>
</dbReference>
<dbReference type="Reactome" id="R-SSC-72702">
    <property type="pathway name" value="Ribosomal scanning and start codon recognition"/>
</dbReference>
<dbReference type="Reactome" id="R-SSC-72706">
    <property type="pathway name" value="GTP hydrolysis and joining of the 60S ribosomal subunit"/>
</dbReference>
<dbReference type="Reactome" id="R-SSC-975956">
    <property type="pathway name" value="Nonsense Mediated Decay (NMD) independent of the Exon Junction Complex (EJC)"/>
</dbReference>
<dbReference type="Reactome" id="R-SSC-975957">
    <property type="pathway name" value="Nonsense Mediated Decay (NMD) enhanced by the Exon Junction Complex (EJC)"/>
</dbReference>
<dbReference type="ChiTaRS" id="RPS12">
    <property type="organism name" value="pig"/>
</dbReference>
<dbReference type="Proteomes" id="UP000008227">
    <property type="component" value="Chromosome 1"/>
</dbReference>
<dbReference type="Proteomes" id="UP000314985">
    <property type="component" value="Chromosome 1"/>
</dbReference>
<dbReference type="Proteomes" id="UP000694570">
    <property type="component" value="Unplaced"/>
</dbReference>
<dbReference type="Proteomes" id="UP000694571">
    <property type="component" value="Unplaced"/>
</dbReference>
<dbReference type="Proteomes" id="UP000694720">
    <property type="component" value="Unplaced"/>
</dbReference>
<dbReference type="Proteomes" id="UP000694722">
    <property type="component" value="Unplaced"/>
</dbReference>
<dbReference type="Proteomes" id="UP000694723">
    <property type="component" value="Unplaced"/>
</dbReference>
<dbReference type="Proteomes" id="UP000694724">
    <property type="component" value="Unplaced"/>
</dbReference>
<dbReference type="Proteomes" id="UP000694725">
    <property type="component" value="Unplaced"/>
</dbReference>
<dbReference type="Proteomes" id="UP000694726">
    <property type="component" value="Unplaced"/>
</dbReference>
<dbReference type="Proteomes" id="UP000694727">
    <property type="component" value="Unplaced"/>
</dbReference>
<dbReference type="Proteomes" id="UP000694728">
    <property type="component" value="Unplaced"/>
</dbReference>
<dbReference type="Bgee" id="ENSSSCG00000004177">
    <property type="expression patterns" value="Expressed in forelimb bud and 43 other cell types or tissues"/>
</dbReference>
<dbReference type="ExpressionAtlas" id="P46405">
    <property type="expression patterns" value="baseline"/>
</dbReference>
<dbReference type="GO" id="GO:0022627">
    <property type="term" value="C:cytosolic small ribosomal subunit"/>
    <property type="evidence" value="ECO:0000318"/>
    <property type="project" value="GO_Central"/>
</dbReference>
<dbReference type="GO" id="GO:0005794">
    <property type="term" value="C:Golgi apparatus"/>
    <property type="evidence" value="ECO:0007669"/>
    <property type="project" value="Ensembl"/>
</dbReference>
<dbReference type="GO" id="GO:0005730">
    <property type="term" value="C:nucleolus"/>
    <property type="evidence" value="ECO:0007669"/>
    <property type="project" value="UniProtKB-SubCell"/>
</dbReference>
<dbReference type="GO" id="GO:0032040">
    <property type="term" value="C:small-subunit processome"/>
    <property type="evidence" value="ECO:0000250"/>
    <property type="project" value="UniProtKB"/>
</dbReference>
<dbReference type="GO" id="GO:0003735">
    <property type="term" value="F:structural constituent of ribosome"/>
    <property type="evidence" value="ECO:0000318"/>
    <property type="project" value="GO_Central"/>
</dbReference>
<dbReference type="GO" id="GO:1990145">
    <property type="term" value="P:maintenance of translational fidelity"/>
    <property type="evidence" value="ECO:0000318"/>
    <property type="project" value="GO_Central"/>
</dbReference>
<dbReference type="GO" id="GO:0090263">
    <property type="term" value="P:positive regulation of canonical Wnt signaling pathway"/>
    <property type="evidence" value="ECO:0007669"/>
    <property type="project" value="Ensembl"/>
</dbReference>
<dbReference type="GO" id="GO:0042274">
    <property type="term" value="P:ribosomal small subunit biogenesis"/>
    <property type="evidence" value="ECO:0000250"/>
    <property type="project" value="UniProtKB"/>
</dbReference>
<dbReference type="FunFam" id="3.30.1330.30:FF:000011">
    <property type="entry name" value="40S ribosomal protein S12"/>
    <property type="match status" value="1"/>
</dbReference>
<dbReference type="Gene3D" id="3.30.1330.30">
    <property type="match status" value="1"/>
</dbReference>
<dbReference type="InterPro" id="IPR029064">
    <property type="entry name" value="Ribosomal_eL30-like_sf"/>
</dbReference>
<dbReference type="InterPro" id="IPR004038">
    <property type="entry name" value="Ribosomal_eL8/eL30/eS12/Gad45"/>
</dbReference>
<dbReference type="InterPro" id="IPR000530">
    <property type="entry name" value="Ribosomal_eS12"/>
</dbReference>
<dbReference type="InterPro" id="IPR047860">
    <property type="entry name" value="Ribosomal_eS12_CS"/>
</dbReference>
<dbReference type="PANTHER" id="PTHR11843">
    <property type="entry name" value="40S RIBOSOMAL PROTEIN S12"/>
    <property type="match status" value="1"/>
</dbReference>
<dbReference type="Pfam" id="PF01248">
    <property type="entry name" value="Ribosomal_L7Ae"/>
    <property type="match status" value="1"/>
</dbReference>
<dbReference type="PRINTS" id="PR00972">
    <property type="entry name" value="RIBSOMALS12E"/>
</dbReference>
<dbReference type="SUPFAM" id="SSF55315">
    <property type="entry name" value="L30e-like"/>
    <property type="match status" value="1"/>
</dbReference>
<dbReference type="PROSITE" id="PS01189">
    <property type="entry name" value="RIBOSOMAL_S12E"/>
    <property type="match status" value="1"/>
</dbReference>
<organism>
    <name type="scientific">Sus scrofa</name>
    <name type="common">Pig</name>
    <dbReference type="NCBI Taxonomy" id="9823"/>
    <lineage>
        <taxon>Eukaryota</taxon>
        <taxon>Metazoa</taxon>
        <taxon>Chordata</taxon>
        <taxon>Craniata</taxon>
        <taxon>Vertebrata</taxon>
        <taxon>Euteleostomi</taxon>
        <taxon>Mammalia</taxon>
        <taxon>Eutheria</taxon>
        <taxon>Laurasiatheria</taxon>
        <taxon>Artiodactyla</taxon>
        <taxon>Suina</taxon>
        <taxon>Suidae</taxon>
        <taxon>Sus</taxon>
    </lineage>
</organism>
<protein>
    <recommendedName>
        <fullName evidence="4">Small ribosomal subunit protein eS12</fullName>
    </recommendedName>
    <alternativeName>
        <fullName>40S ribosomal protein S12</fullName>
    </alternativeName>
</protein>